<name>3F_DICDI</name>
<accession>P13475</accession>
<accession>Q54LQ1</accession>
<gene>
    <name type="primary">pspG</name>
    <name type="synonym">3F</name>
    <name type="ORF">DDB_G0286499</name>
</gene>
<feature type="signal peptide" evidence="1">
    <location>
        <begin position="1"/>
        <end position="19"/>
    </location>
</feature>
<feature type="chain" id="PRO_0000020577" description="Protein 3F">
    <location>
        <begin position="20"/>
        <end position="246"/>
    </location>
</feature>
<feature type="repeat" description="1">
    <location>
        <begin position="145"/>
        <end position="153"/>
    </location>
</feature>
<feature type="repeat" description="2">
    <location>
        <begin position="154"/>
        <end position="162"/>
    </location>
</feature>
<feature type="repeat" description="3">
    <location>
        <begin position="163"/>
        <end position="171"/>
    </location>
</feature>
<feature type="repeat" description="4; truncated">
    <location>
        <begin position="172"/>
        <end position="176"/>
    </location>
</feature>
<feature type="region of interest" description="Disordered" evidence="2">
    <location>
        <begin position="113"/>
        <end position="223"/>
    </location>
</feature>
<feature type="region of interest" description="3.5 X 9 AA tandem repeats of S-P-K-[ST]-D-A-K-E-A">
    <location>
        <begin position="145"/>
        <end position="176"/>
    </location>
</feature>
<feature type="compositionally biased region" description="Basic and acidic residues" evidence="2">
    <location>
        <begin position="113"/>
        <end position="124"/>
    </location>
</feature>
<feature type="compositionally biased region" description="Polar residues" evidence="2">
    <location>
        <begin position="126"/>
        <end position="145"/>
    </location>
</feature>
<feature type="compositionally biased region" description="Basic and acidic residues" evidence="2">
    <location>
        <begin position="146"/>
        <end position="177"/>
    </location>
</feature>
<feature type="compositionally biased region" description="Low complexity" evidence="2">
    <location>
        <begin position="181"/>
        <end position="213"/>
    </location>
</feature>
<feature type="glycosylation site" description="N-linked (GlcNAc...) asparagine" evidence="1">
    <location>
        <position position="52"/>
    </location>
</feature>
<feature type="sequence conflict" description="In Ref. 2; CAA34255." evidence="3" ref="2">
    <original>S</original>
    <variation>N</variation>
    <location>
        <position position="22"/>
    </location>
</feature>
<keyword id="KW-0325">Glycoprotein</keyword>
<keyword id="KW-1185">Reference proteome</keyword>
<keyword id="KW-0677">Repeat</keyword>
<keyword id="KW-0732">Signal</keyword>
<evidence type="ECO:0000255" key="1"/>
<evidence type="ECO:0000256" key="2">
    <source>
        <dbReference type="SAM" id="MobiDB-lite"/>
    </source>
</evidence>
<evidence type="ECO:0000305" key="3"/>
<organism>
    <name type="scientific">Dictyostelium discoideum</name>
    <name type="common">Social amoeba</name>
    <dbReference type="NCBI Taxonomy" id="44689"/>
    <lineage>
        <taxon>Eukaryota</taxon>
        <taxon>Amoebozoa</taxon>
        <taxon>Evosea</taxon>
        <taxon>Eumycetozoa</taxon>
        <taxon>Dictyostelia</taxon>
        <taxon>Dictyosteliales</taxon>
        <taxon>Dictyosteliaceae</taxon>
        <taxon>Dictyostelium</taxon>
    </lineage>
</organism>
<proteinExistence type="evidence at transcript level"/>
<reference key="1">
    <citation type="journal article" date="2005" name="Nature">
        <title>The genome of the social amoeba Dictyostelium discoideum.</title>
        <authorList>
            <person name="Eichinger L."/>
            <person name="Pachebat J.A."/>
            <person name="Gloeckner G."/>
            <person name="Rajandream M.A."/>
            <person name="Sucgang R."/>
            <person name="Berriman M."/>
            <person name="Song J."/>
            <person name="Olsen R."/>
            <person name="Szafranski K."/>
            <person name="Xu Q."/>
            <person name="Tunggal B."/>
            <person name="Kummerfeld S."/>
            <person name="Madera M."/>
            <person name="Konfortov B.A."/>
            <person name="Rivero F."/>
            <person name="Bankier A.T."/>
            <person name="Lehmann R."/>
            <person name="Hamlin N."/>
            <person name="Davies R."/>
            <person name="Gaudet P."/>
            <person name="Fey P."/>
            <person name="Pilcher K."/>
            <person name="Chen G."/>
            <person name="Saunders D."/>
            <person name="Sodergren E.J."/>
            <person name="Davis P."/>
            <person name="Kerhornou A."/>
            <person name="Nie X."/>
            <person name="Hall N."/>
            <person name="Anjard C."/>
            <person name="Hemphill L."/>
            <person name="Bason N."/>
            <person name="Farbrother P."/>
            <person name="Desany B."/>
            <person name="Just E."/>
            <person name="Morio T."/>
            <person name="Rost R."/>
            <person name="Churcher C.M."/>
            <person name="Cooper J."/>
            <person name="Haydock S."/>
            <person name="van Driessche N."/>
            <person name="Cronin A."/>
            <person name="Goodhead I."/>
            <person name="Muzny D.M."/>
            <person name="Mourier T."/>
            <person name="Pain A."/>
            <person name="Lu M."/>
            <person name="Harper D."/>
            <person name="Lindsay R."/>
            <person name="Hauser H."/>
            <person name="James K.D."/>
            <person name="Quiles M."/>
            <person name="Madan Babu M."/>
            <person name="Saito T."/>
            <person name="Buchrieser C."/>
            <person name="Wardroper A."/>
            <person name="Felder M."/>
            <person name="Thangavelu M."/>
            <person name="Johnson D."/>
            <person name="Knights A."/>
            <person name="Loulseged H."/>
            <person name="Mungall K.L."/>
            <person name="Oliver K."/>
            <person name="Price C."/>
            <person name="Quail M.A."/>
            <person name="Urushihara H."/>
            <person name="Hernandez J."/>
            <person name="Rabbinowitsch E."/>
            <person name="Steffen D."/>
            <person name="Sanders M."/>
            <person name="Ma J."/>
            <person name="Kohara Y."/>
            <person name="Sharp S."/>
            <person name="Simmonds M.N."/>
            <person name="Spiegler S."/>
            <person name="Tivey A."/>
            <person name="Sugano S."/>
            <person name="White B."/>
            <person name="Walker D."/>
            <person name="Woodward J.R."/>
            <person name="Winckler T."/>
            <person name="Tanaka Y."/>
            <person name="Shaulsky G."/>
            <person name="Schleicher M."/>
            <person name="Weinstock G.M."/>
            <person name="Rosenthal A."/>
            <person name="Cox E.C."/>
            <person name="Chisholm R.L."/>
            <person name="Gibbs R.A."/>
            <person name="Loomis W.F."/>
            <person name="Platzer M."/>
            <person name="Kay R.R."/>
            <person name="Williams J.G."/>
            <person name="Dear P.H."/>
            <person name="Noegel A.A."/>
            <person name="Barrell B.G."/>
            <person name="Kuspa A."/>
        </authorList>
    </citation>
    <scope>NUCLEOTIDE SEQUENCE [LARGE SCALE GENOMIC DNA]</scope>
    <source>
        <strain>AX4</strain>
    </source>
</reference>
<reference key="2">
    <citation type="journal article" date="1989" name="Nucleic Acids Res.">
        <title>Nucleotide sequence of a late developmentally regulated prespore-enriched Dictyostelium discoideum gene.</title>
        <authorList>
            <person name="Widdowson D.C.C."/>
            <person name="Jagger P.S."/>
            <person name="Hames B.D."/>
        </authorList>
    </citation>
    <scope>NUCLEOTIDE SEQUENCE [MRNA] OF 1-215</scope>
    <source>
        <strain>AX2</strain>
    </source>
</reference>
<dbReference type="EMBL" id="AAFI02000087">
    <property type="protein sequence ID" value="EAL64176.1"/>
    <property type="molecule type" value="Genomic_DNA"/>
</dbReference>
<dbReference type="EMBL" id="X16124">
    <property type="protein sequence ID" value="CAA34255.1"/>
    <property type="molecule type" value="mRNA"/>
</dbReference>
<dbReference type="PIR" id="S06595">
    <property type="entry name" value="S06595"/>
</dbReference>
<dbReference type="RefSeq" id="XP_637681.1">
    <property type="nucleotide sequence ID" value="XM_632589.1"/>
</dbReference>
<dbReference type="GlyCosmos" id="P13475">
    <property type="glycosylation" value="1 site, No reported glycans"/>
</dbReference>
<dbReference type="GlyGen" id="P13475">
    <property type="glycosylation" value="1 site"/>
</dbReference>
<dbReference type="PaxDb" id="44689-DDB0219978"/>
<dbReference type="EnsemblProtists" id="EAL64176">
    <property type="protein sequence ID" value="EAL64176"/>
    <property type="gene ID" value="DDB_G0286499"/>
</dbReference>
<dbReference type="GeneID" id="8625647"/>
<dbReference type="KEGG" id="ddi:DDB_G0286499"/>
<dbReference type="dictyBase" id="DDB_G0286499">
    <property type="gene designation" value="pspG"/>
</dbReference>
<dbReference type="VEuPathDB" id="AmoebaDB:DDB_G0286499"/>
<dbReference type="HOGENOM" id="CLU_1130798_0_0_1"/>
<dbReference type="InParanoid" id="P13475"/>
<dbReference type="PRO" id="PR:P13475"/>
<dbReference type="Proteomes" id="UP000002195">
    <property type="component" value="Chromosome 4"/>
</dbReference>
<sequence>MKLLSKLILTLALATYASASESFRYINWDNPPHDVTFYEGDVLQFTTNEGRNSTITLISDTENGDKSFDGVLNEDQRSFVQKALPPGRYTFKDLNSGSKSIIRVKESKELAKEVRPIDRLKDNADAANTENAQKSPNTQSTQKGSPKSDAKEASPKTDAKEASPKSDAKEASPKTDTKQGSSPKTDTKSSTQKPSSSSDSSKAKAEANTAANNEEAEHVEKGASNTLKASLSIISAACVLSLGYLL</sequence>
<protein>
    <recommendedName>
        <fullName>Protein 3F</fullName>
    </recommendedName>
    <alternativeName>
        <fullName>Prespore-specific gene protein</fullName>
    </alternativeName>
</protein>